<keyword id="KW-0004">4Fe-4S</keyword>
<keyword id="KW-0997">Cell inner membrane</keyword>
<keyword id="KW-1003">Cell membrane</keyword>
<keyword id="KW-0249">Electron transport</keyword>
<keyword id="KW-0408">Iron</keyword>
<keyword id="KW-0411">Iron-sulfur</keyword>
<keyword id="KW-0472">Membrane</keyword>
<keyword id="KW-0479">Metal-binding</keyword>
<keyword id="KW-0677">Repeat</keyword>
<keyword id="KW-1278">Translocase</keyword>
<keyword id="KW-0813">Transport</keyword>
<evidence type="ECO:0000255" key="1">
    <source>
        <dbReference type="HAMAP-Rule" id="MF_00463"/>
    </source>
</evidence>
<feature type="chain" id="PRO_1000194476" description="Ion-translocating oxidoreductase complex subunit B">
    <location>
        <begin position="1"/>
        <end position="192"/>
    </location>
</feature>
<feature type="domain" description="4Fe-4S" evidence="1">
    <location>
        <begin position="32"/>
        <end position="91"/>
    </location>
</feature>
<feature type="domain" description="4Fe-4S ferredoxin-type 1" evidence="1">
    <location>
        <begin position="108"/>
        <end position="137"/>
    </location>
</feature>
<feature type="domain" description="4Fe-4S ferredoxin-type 2" evidence="1">
    <location>
        <begin position="138"/>
        <end position="167"/>
    </location>
</feature>
<feature type="region of interest" description="Hydrophobic" evidence="1">
    <location>
        <begin position="1"/>
        <end position="26"/>
    </location>
</feature>
<feature type="binding site" evidence="1">
    <location>
        <position position="49"/>
    </location>
    <ligand>
        <name>[4Fe-4S] cluster</name>
        <dbReference type="ChEBI" id="CHEBI:49883"/>
        <label>1</label>
    </ligand>
</feature>
<feature type="binding site" evidence="1">
    <location>
        <position position="52"/>
    </location>
    <ligand>
        <name>[4Fe-4S] cluster</name>
        <dbReference type="ChEBI" id="CHEBI:49883"/>
        <label>1</label>
    </ligand>
</feature>
<feature type="binding site" evidence="1">
    <location>
        <position position="57"/>
    </location>
    <ligand>
        <name>[4Fe-4S] cluster</name>
        <dbReference type="ChEBI" id="CHEBI:49883"/>
        <label>1</label>
    </ligand>
</feature>
<feature type="binding site" evidence="1">
    <location>
        <position position="74"/>
    </location>
    <ligand>
        <name>[4Fe-4S] cluster</name>
        <dbReference type="ChEBI" id="CHEBI:49883"/>
        <label>1</label>
    </ligand>
</feature>
<feature type="binding site" evidence="1">
    <location>
        <position position="117"/>
    </location>
    <ligand>
        <name>[4Fe-4S] cluster</name>
        <dbReference type="ChEBI" id="CHEBI:49883"/>
        <label>2</label>
    </ligand>
</feature>
<feature type="binding site" evidence="1">
    <location>
        <position position="120"/>
    </location>
    <ligand>
        <name>[4Fe-4S] cluster</name>
        <dbReference type="ChEBI" id="CHEBI:49883"/>
        <label>2</label>
    </ligand>
</feature>
<feature type="binding site" evidence="1">
    <location>
        <position position="123"/>
    </location>
    <ligand>
        <name>[4Fe-4S] cluster</name>
        <dbReference type="ChEBI" id="CHEBI:49883"/>
        <label>2</label>
    </ligand>
</feature>
<feature type="binding site" evidence="1">
    <location>
        <position position="127"/>
    </location>
    <ligand>
        <name>[4Fe-4S] cluster</name>
        <dbReference type="ChEBI" id="CHEBI:49883"/>
        <label>3</label>
    </ligand>
</feature>
<feature type="binding site" evidence="1">
    <location>
        <position position="147"/>
    </location>
    <ligand>
        <name>[4Fe-4S] cluster</name>
        <dbReference type="ChEBI" id="CHEBI:49883"/>
        <label>3</label>
    </ligand>
</feature>
<feature type="binding site" evidence="1">
    <location>
        <position position="150"/>
    </location>
    <ligand>
        <name>[4Fe-4S] cluster</name>
        <dbReference type="ChEBI" id="CHEBI:49883"/>
        <label>3</label>
    </ligand>
</feature>
<feature type="binding site" evidence="1">
    <location>
        <position position="153"/>
    </location>
    <ligand>
        <name>[4Fe-4S] cluster</name>
        <dbReference type="ChEBI" id="CHEBI:49883"/>
        <label>3</label>
    </ligand>
</feature>
<feature type="binding site" evidence="1">
    <location>
        <position position="157"/>
    </location>
    <ligand>
        <name>[4Fe-4S] cluster</name>
        <dbReference type="ChEBI" id="CHEBI:49883"/>
        <label>2</label>
    </ligand>
</feature>
<name>RSXB_ECOSE</name>
<proteinExistence type="inferred from homology"/>
<accession>B6IB63</accession>
<organism>
    <name type="scientific">Escherichia coli (strain SE11)</name>
    <dbReference type="NCBI Taxonomy" id="409438"/>
    <lineage>
        <taxon>Bacteria</taxon>
        <taxon>Pseudomonadati</taxon>
        <taxon>Pseudomonadota</taxon>
        <taxon>Gammaproteobacteria</taxon>
        <taxon>Enterobacterales</taxon>
        <taxon>Enterobacteriaceae</taxon>
        <taxon>Escherichia</taxon>
    </lineage>
</organism>
<reference key="1">
    <citation type="journal article" date="2008" name="DNA Res.">
        <title>Complete genome sequence and comparative analysis of the wild-type commensal Escherichia coli strain SE11 isolated from a healthy adult.</title>
        <authorList>
            <person name="Oshima K."/>
            <person name="Toh H."/>
            <person name="Ogura Y."/>
            <person name="Sasamoto H."/>
            <person name="Morita H."/>
            <person name="Park S.-H."/>
            <person name="Ooka T."/>
            <person name="Iyoda S."/>
            <person name="Taylor T.D."/>
            <person name="Hayashi T."/>
            <person name="Itoh K."/>
            <person name="Hattori M."/>
        </authorList>
    </citation>
    <scope>NUCLEOTIDE SEQUENCE [LARGE SCALE GENOMIC DNA]</scope>
    <source>
        <strain>SE11</strain>
    </source>
</reference>
<comment type="function">
    <text evidence="1">Part of a membrane-bound complex that couples electron transfer with translocation of ions across the membrane. Required to maintain the reduced state of SoxR.</text>
</comment>
<comment type="cofactor">
    <cofactor evidence="1">
        <name>[4Fe-4S] cluster</name>
        <dbReference type="ChEBI" id="CHEBI:49883"/>
    </cofactor>
    <text evidence="1">Binds 3 [4Fe-4S] clusters.</text>
</comment>
<comment type="subunit">
    <text evidence="1">The complex is composed of six subunits: RsxA, RsxB, RsxC, RsxD, RsxE and RsxG.</text>
</comment>
<comment type="subcellular location">
    <subcellularLocation>
        <location evidence="1">Cell inner membrane</location>
    </subcellularLocation>
</comment>
<comment type="similarity">
    <text evidence="1">Belongs to the 4Fe4S bacterial-type ferredoxin family. RnfB subfamily.</text>
</comment>
<sequence length="192" mass="20544">MNAIWIAVAAVSLLGLAFGAILGYASRRFAVEDDPVVEKIDEILPQSQCGQCGYPGCRPYAEAISCNGEKINRCAPGGEAVMLKIAELLNVEPQPLDGEAQELTPARMVAVIDENNCIGCTKCIQACPVDAIVGATRAMHTVMSDLCTGCNLCVDPCPTHCISLQPVAETPDSWKWDLNTIPVRIIPVEHHA</sequence>
<protein>
    <recommendedName>
        <fullName evidence="1">Ion-translocating oxidoreductase complex subunit B</fullName>
        <ecNumber evidence="1">7.-.-.-</ecNumber>
    </recommendedName>
    <alternativeName>
        <fullName evidence="1">Rsx electron transport complex subunit B</fullName>
    </alternativeName>
</protein>
<dbReference type="EC" id="7.-.-.-" evidence="1"/>
<dbReference type="EMBL" id="AP009240">
    <property type="protein sequence ID" value="BAG77274.1"/>
    <property type="molecule type" value="Genomic_DNA"/>
</dbReference>
<dbReference type="RefSeq" id="WP_000991809.1">
    <property type="nucleotide sequence ID" value="NC_011415.1"/>
</dbReference>
<dbReference type="GeneID" id="93775780"/>
<dbReference type="KEGG" id="ecy:ECSE_1750"/>
<dbReference type="HOGENOM" id="CLU_063448_2_0_6"/>
<dbReference type="Proteomes" id="UP000008199">
    <property type="component" value="Chromosome"/>
</dbReference>
<dbReference type="GO" id="GO:0005886">
    <property type="term" value="C:plasma membrane"/>
    <property type="evidence" value="ECO:0007669"/>
    <property type="project" value="UniProtKB-SubCell"/>
</dbReference>
<dbReference type="GO" id="GO:0051539">
    <property type="term" value="F:4 iron, 4 sulfur cluster binding"/>
    <property type="evidence" value="ECO:0007669"/>
    <property type="project" value="UniProtKB-UniRule"/>
</dbReference>
<dbReference type="GO" id="GO:0009055">
    <property type="term" value="F:electron transfer activity"/>
    <property type="evidence" value="ECO:0007669"/>
    <property type="project" value="InterPro"/>
</dbReference>
<dbReference type="GO" id="GO:0046872">
    <property type="term" value="F:metal ion binding"/>
    <property type="evidence" value="ECO:0007669"/>
    <property type="project" value="UniProtKB-KW"/>
</dbReference>
<dbReference type="GO" id="GO:0022900">
    <property type="term" value="P:electron transport chain"/>
    <property type="evidence" value="ECO:0007669"/>
    <property type="project" value="UniProtKB-UniRule"/>
</dbReference>
<dbReference type="FunFam" id="1.10.15.40:FF:000001">
    <property type="entry name" value="Ion-translocating oxidoreductase complex subunit B"/>
    <property type="match status" value="1"/>
</dbReference>
<dbReference type="Gene3D" id="3.30.70.20">
    <property type="match status" value="1"/>
</dbReference>
<dbReference type="Gene3D" id="1.10.15.40">
    <property type="entry name" value="Electron transport complex subunit B, putative Fe-S cluster"/>
    <property type="match status" value="1"/>
</dbReference>
<dbReference type="HAMAP" id="MF_00463">
    <property type="entry name" value="RsxB_RnfB"/>
    <property type="match status" value="1"/>
</dbReference>
<dbReference type="InterPro" id="IPR007202">
    <property type="entry name" value="4Fe-4S_dom"/>
</dbReference>
<dbReference type="InterPro" id="IPR017896">
    <property type="entry name" value="4Fe4S_Fe-S-bd"/>
</dbReference>
<dbReference type="InterPro" id="IPR017900">
    <property type="entry name" value="4Fe4S_Fe_S_CS"/>
</dbReference>
<dbReference type="InterPro" id="IPR050395">
    <property type="entry name" value="4Fe4S_Ferredoxin_RnfB"/>
</dbReference>
<dbReference type="InterPro" id="IPR010207">
    <property type="entry name" value="Elect_transpt_cplx_RnfB/RsxB"/>
</dbReference>
<dbReference type="InterPro" id="IPR016463">
    <property type="entry name" value="RnfB/RsxB_Proteobac"/>
</dbReference>
<dbReference type="NCBIfam" id="NF003475">
    <property type="entry name" value="PRK05113.1"/>
    <property type="match status" value="1"/>
</dbReference>
<dbReference type="NCBIfam" id="TIGR01944">
    <property type="entry name" value="rnfB"/>
    <property type="match status" value="1"/>
</dbReference>
<dbReference type="PANTHER" id="PTHR43560">
    <property type="entry name" value="ION-TRANSLOCATING OXIDOREDUCTASE COMPLEX SUBUNIT B"/>
    <property type="match status" value="1"/>
</dbReference>
<dbReference type="PANTHER" id="PTHR43560:SF1">
    <property type="entry name" value="ION-TRANSLOCATING OXIDOREDUCTASE COMPLEX SUBUNIT B"/>
    <property type="match status" value="1"/>
</dbReference>
<dbReference type="Pfam" id="PF14697">
    <property type="entry name" value="Fer4_21"/>
    <property type="match status" value="1"/>
</dbReference>
<dbReference type="Pfam" id="PF04060">
    <property type="entry name" value="FeS"/>
    <property type="match status" value="1"/>
</dbReference>
<dbReference type="PIRSF" id="PIRSF005784">
    <property type="entry name" value="Elect_transpt_RnfB"/>
    <property type="match status" value="1"/>
</dbReference>
<dbReference type="SUPFAM" id="SSF54862">
    <property type="entry name" value="4Fe-4S ferredoxins"/>
    <property type="match status" value="1"/>
</dbReference>
<dbReference type="PROSITE" id="PS51656">
    <property type="entry name" value="4FE4S"/>
    <property type="match status" value="1"/>
</dbReference>
<dbReference type="PROSITE" id="PS00198">
    <property type="entry name" value="4FE4S_FER_1"/>
    <property type="match status" value="2"/>
</dbReference>
<dbReference type="PROSITE" id="PS51379">
    <property type="entry name" value="4FE4S_FER_2"/>
    <property type="match status" value="2"/>
</dbReference>
<gene>
    <name evidence="1" type="primary">rsxB</name>
    <name type="ordered locus">ECSE_1750</name>
</gene>